<sequence>MDKKVSFTSSVAHSTPPYLSTSISWGLPTKSNGVTESLSLKVVDARPERLINTKNISFQDQDSSSTLSSAQSSNDVTSSGDDNPSRQISFLAHSDVCKGFEETQRKRFAIKSGSSTAGIADIHSSPSKANFSFHYADPHFGGLMPAAYLPQATIWNPQMTRVPLPFDLIENEPVFVNAKQFHAIMRRRQQRAKLEAQNKLIKARKPYLHESRHVHALKRPRGSGGRFLNTKKLQESTDPKQDMPIQQQHATGNMSRFVLYQLQNSNDCDCSTTSRSDITSASDSVNLFGHSEFLISDCPSQTNPTMYVHGQSNDMHGGRNTHHFSVHI</sequence>
<accession>Q9LNP6</accession>
<accession>B3LF92</accession>
<dbReference type="EMBL" id="AC022492">
    <property type="protein sequence ID" value="AAF79478.1"/>
    <property type="status" value="ALT_SEQ"/>
    <property type="molecule type" value="Genomic_DNA"/>
</dbReference>
<dbReference type="EMBL" id="AC034257">
    <property type="status" value="NOT_ANNOTATED_CDS"/>
    <property type="molecule type" value="Genomic_DNA"/>
</dbReference>
<dbReference type="EMBL" id="CP002684">
    <property type="protein sequence ID" value="AEE29608.1"/>
    <property type="molecule type" value="Genomic_DNA"/>
</dbReference>
<dbReference type="EMBL" id="CP002684">
    <property type="protein sequence ID" value="AEE29609.1"/>
    <property type="molecule type" value="Genomic_DNA"/>
</dbReference>
<dbReference type="EMBL" id="CP002684">
    <property type="protein sequence ID" value="AEE29610.1"/>
    <property type="molecule type" value="Genomic_DNA"/>
</dbReference>
<dbReference type="EMBL" id="CP002684">
    <property type="protein sequence ID" value="AEE29611.1"/>
    <property type="molecule type" value="Genomic_DNA"/>
</dbReference>
<dbReference type="EMBL" id="BT033080">
    <property type="protein sequence ID" value="ACE98541.1"/>
    <property type="molecule type" value="mRNA"/>
</dbReference>
<dbReference type="RefSeq" id="NP_001185024.1">
    <property type="nucleotide sequence ID" value="NM_001198095.1"/>
</dbReference>
<dbReference type="RefSeq" id="NP_173202.1">
    <property type="nucleotide sequence ID" value="NM_101621.3"/>
</dbReference>
<dbReference type="RefSeq" id="NP_973850.1">
    <property type="nucleotide sequence ID" value="NM_202121.2"/>
</dbReference>
<dbReference type="RefSeq" id="NP_973851.1">
    <property type="nucleotide sequence ID" value="NM_202122.2"/>
</dbReference>
<dbReference type="SMR" id="Q9LNP6"/>
<dbReference type="BioGRID" id="23575">
    <property type="interactions" value="25"/>
</dbReference>
<dbReference type="FunCoup" id="Q9LNP6">
    <property type="interactions" value="15"/>
</dbReference>
<dbReference type="IntAct" id="Q9LNP6">
    <property type="interactions" value="21"/>
</dbReference>
<dbReference type="STRING" id="3702.Q9LNP6"/>
<dbReference type="PaxDb" id="3702-AT1G17590.3"/>
<dbReference type="ProteomicsDB" id="251110"/>
<dbReference type="EnsemblPlants" id="AT1G17590.1">
    <property type="protein sequence ID" value="AT1G17590.1"/>
    <property type="gene ID" value="AT1G17590"/>
</dbReference>
<dbReference type="EnsemblPlants" id="AT1G17590.2">
    <property type="protein sequence ID" value="AT1G17590.2"/>
    <property type="gene ID" value="AT1G17590"/>
</dbReference>
<dbReference type="EnsemblPlants" id="AT1G17590.3">
    <property type="protein sequence ID" value="AT1G17590.3"/>
    <property type="gene ID" value="AT1G17590"/>
</dbReference>
<dbReference type="EnsemblPlants" id="AT1G17590.4">
    <property type="protein sequence ID" value="AT1G17590.4"/>
    <property type="gene ID" value="AT1G17590"/>
</dbReference>
<dbReference type="GeneID" id="838335"/>
<dbReference type="Gramene" id="AT1G17590.1">
    <property type="protein sequence ID" value="AT1G17590.1"/>
    <property type="gene ID" value="AT1G17590"/>
</dbReference>
<dbReference type="Gramene" id="AT1G17590.2">
    <property type="protein sequence ID" value="AT1G17590.2"/>
    <property type="gene ID" value="AT1G17590"/>
</dbReference>
<dbReference type="Gramene" id="AT1G17590.3">
    <property type="protein sequence ID" value="AT1G17590.3"/>
    <property type="gene ID" value="AT1G17590"/>
</dbReference>
<dbReference type="Gramene" id="AT1G17590.4">
    <property type="protein sequence ID" value="AT1G17590.4"/>
    <property type="gene ID" value="AT1G17590"/>
</dbReference>
<dbReference type="KEGG" id="ath:AT1G17590"/>
<dbReference type="Araport" id="AT1G17590"/>
<dbReference type="TAIR" id="AT1G17590">
    <property type="gene designation" value="NF-YA8"/>
</dbReference>
<dbReference type="eggNOG" id="KOG1561">
    <property type="taxonomic scope" value="Eukaryota"/>
</dbReference>
<dbReference type="HOGENOM" id="CLU_058712_2_0_1"/>
<dbReference type="InParanoid" id="Q9LNP6"/>
<dbReference type="OMA" id="GGNTHHF"/>
<dbReference type="OrthoDB" id="1097733at2759"/>
<dbReference type="PhylomeDB" id="Q9LNP6"/>
<dbReference type="PRO" id="PR:Q9LNP6"/>
<dbReference type="Proteomes" id="UP000006548">
    <property type="component" value="Chromosome 1"/>
</dbReference>
<dbReference type="ExpressionAtlas" id="Q9LNP6">
    <property type="expression patterns" value="baseline and differential"/>
</dbReference>
<dbReference type="GO" id="GO:0016602">
    <property type="term" value="C:CCAAT-binding factor complex"/>
    <property type="evidence" value="ECO:0007669"/>
    <property type="project" value="InterPro"/>
</dbReference>
<dbReference type="GO" id="GO:0003677">
    <property type="term" value="F:DNA binding"/>
    <property type="evidence" value="ECO:0007669"/>
    <property type="project" value="UniProtKB-KW"/>
</dbReference>
<dbReference type="GO" id="GO:0003700">
    <property type="term" value="F:DNA-binding transcription factor activity"/>
    <property type="evidence" value="ECO:0000250"/>
    <property type="project" value="TAIR"/>
</dbReference>
<dbReference type="Gene3D" id="6.10.250.2430">
    <property type="match status" value="1"/>
</dbReference>
<dbReference type="InterPro" id="IPR018362">
    <property type="entry name" value="CCAAT-binding_factor_CS"/>
</dbReference>
<dbReference type="InterPro" id="IPR001289">
    <property type="entry name" value="NFYA"/>
</dbReference>
<dbReference type="PANTHER" id="PTHR12632">
    <property type="entry name" value="TRANSCRIPTION FACTOR NF-Y ALPHA-RELATED"/>
    <property type="match status" value="1"/>
</dbReference>
<dbReference type="Pfam" id="PF02045">
    <property type="entry name" value="CBFB_NFYA"/>
    <property type="match status" value="1"/>
</dbReference>
<dbReference type="PRINTS" id="PR00616">
    <property type="entry name" value="CCAATSUBUNTB"/>
</dbReference>
<dbReference type="SMART" id="SM00521">
    <property type="entry name" value="CBF"/>
    <property type="match status" value="1"/>
</dbReference>
<dbReference type="PROSITE" id="PS00686">
    <property type="entry name" value="NFYA_HAP2_1"/>
    <property type="match status" value="1"/>
</dbReference>
<dbReference type="PROSITE" id="PS51152">
    <property type="entry name" value="NFYA_HAP2_2"/>
    <property type="match status" value="1"/>
</dbReference>
<keyword id="KW-0010">Activator</keyword>
<keyword id="KW-0238">DNA-binding</keyword>
<keyword id="KW-0539">Nucleus</keyword>
<keyword id="KW-1185">Reference proteome</keyword>
<keyword id="KW-0804">Transcription</keyword>
<keyword id="KW-0805">Transcription regulation</keyword>
<feature type="chain" id="PRO_0000198778" description="Nuclear transcription factor Y subunit A-8">
    <location>
        <begin position="1"/>
        <end position="328"/>
    </location>
</feature>
<feature type="DNA-binding region" description="NFYA/HAP2-type" evidence="2">
    <location>
        <begin position="205"/>
        <end position="230"/>
    </location>
</feature>
<feature type="region of interest" description="Disordered" evidence="3">
    <location>
        <begin position="54"/>
        <end position="86"/>
    </location>
</feature>
<feature type="short sequence motif" description="Subunit association domain (SAD)">
    <location>
        <begin position="175"/>
        <end position="198"/>
    </location>
</feature>
<feature type="compositionally biased region" description="Low complexity" evidence="3">
    <location>
        <begin position="57"/>
        <end position="75"/>
    </location>
</feature>
<feature type="compositionally biased region" description="Polar residues" evidence="3">
    <location>
        <begin position="76"/>
        <end position="86"/>
    </location>
</feature>
<organism>
    <name type="scientific">Arabidopsis thaliana</name>
    <name type="common">Mouse-ear cress</name>
    <dbReference type="NCBI Taxonomy" id="3702"/>
    <lineage>
        <taxon>Eukaryota</taxon>
        <taxon>Viridiplantae</taxon>
        <taxon>Streptophyta</taxon>
        <taxon>Embryophyta</taxon>
        <taxon>Tracheophyta</taxon>
        <taxon>Spermatophyta</taxon>
        <taxon>Magnoliopsida</taxon>
        <taxon>eudicotyledons</taxon>
        <taxon>Gunneridae</taxon>
        <taxon>Pentapetalae</taxon>
        <taxon>rosids</taxon>
        <taxon>malvids</taxon>
        <taxon>Brassicales</taxon>
        <taxon>Brassicaceae</taxon>
        <taxon>Camelineae</taxon>
        <taxon>Arabidopsis</taxon>
    </lineage>
</organism>
<gene>
    <name type="primary">NFYA8</name>
    <name type="ordered locus">At1g17590</name>
    <name type="ORF">F11A6.14</name>
    <name type="ORF">F1L3.29</name>
</gene>
<reference key="1">
    <citation type="journal article" date="2000" name="Nature">
        <title>Sequence and analysis of chromosome 1 of the plant Arabidopsis thaliana.</title>
        <authorList>
            <person name="Theologis A."/>
            <person name="Ecker J.R."/>
            <person name="Palm C.J."/>
            <person name="Federspiel N.A."/>
            <person name="Kaul S."/>
            <person name="White O."/>
            <person name="Alonso J."/>
            <person name="Altafi H."/>
            <person name="Araujo R."/>
            <person name="Bowman C.L."/>
            <person name="Brooks S.Y."/>
            <person name="Buehler E."/>
            <person name="Chan A."/>
            <person name="Chao Q."/>
            <person name="Chen H."/>
            <person name="Cheuk R.F."/>
            <person name="Chin C.W."/>
            <person name="Chung M.K."/>
            <person name="Conn L."/>
            <person name="Conway A.B."/>
            <person name="Conway A.R."/>
            <person name="Creasy T.H."/>
            <person name="Dewar K."/>
            <person name="Dunn P."/>
            <person name="Etgu P."/>
            <person name="Feldblyum T.V."/>
            <person name="Feng J.-D."/>
            <person name="Fong B."/>
            <person name="Fujii C.Y."/>
            <person name="Gill J.E."/>
            <person name="Goldsmith A.D."/>
            <person name="Haas B."/>
            <person name="Hansen N.F."/>
            <person name="Hughes B."/>
            <person name="Huizar L."/>
            <person name="Hunter J.L."/>
            <person name="Jenkins J."/>
            <person name="Johnson-Hopson C."/>
            <person name="Khan S."/>
            <person name="Khaykin E."/>
            <person name="Kim C.J."/>
            <person name="Koo H.L."/>
            <person name="Kremenetskaia I."/>
            <person name="Kurtz D.B."/>
            <person name="Kwan A."/>
            <person name="Lam B."/>
            <person name="Langin-Hooper S."/>
            <person name="Lee A."/>
            <person name="Lee J.M."/>
            <person name="Lenz C.A."/>
            <person name="Li J.H."/>
            <person name="Li Y.-P."/>
            <person name="Lin X."/>
            <person name="Liu S.X."/>
            <person name="Liu Z.A."/>
            <person name="Luros J.S."/>
            <person name="Maiti R."/>
            <person name="Marziali A."/>
            <person name="Militscher J."/>
            <person name="Miranda M."/>
            <person name="Nguyen M."/>
            <person name="Nierman W.C."/>
            <person name="Osborne B.I."/>
            <person name="Pai G."/>
            <person name="Peterson J."/>
            <person name="Pham P.K."/>
            <person name="Rizzo M."/>
            <person name="Rooney T."/>
            <person name="Rowley D."/>
            <person name="Sakano H."/>
            <person name="Salzberg S.L."/>
            <person name="Schwartz J.R."/>
            <person name="Shinn P."/>
            <person name="Southwick A.M."/>
            <person name="Sun H."/>
            <person name="Tallon L.J."/>
            <person name="Tambunga G."/>
            <person name="Toriumi M.J."/>
            <person name="Town C.D."/>
            <person name="Utterback T."/>
            <person name="Van Aken S."/>
            <person name="Vaysberg M."/>
            <person name="Vysotskaia V.S."/>
            <person name="Walker M."/>
            <person name="Wu D."/>
            <person name="Yu G."/>
            <person name="Fraser C.M."/>
            <person name="Venter J.C."/>
            <person name="Davis R.W."/>
        </authorList>
    </citation>
    <scope>NUCLEOTIDE SEQUENCE [LARGE SCALE GENOMIC DNA]</scope>
    <source>
        <strain>cv. Columbia</strain>
    </source>
</reference>
<reference key="2">
    <citation type="journal article" date="2017" name="Plant J.">
        <title>Araport11: a complete reannotation of the Arabidopsis thaliana reference genome.</title>
        <authorList>
            <person name="Cheng C.Y."/>
            <person name="Krishnakumar V."/>
            <person name="Chan A.P."/>
            <person name="Thibaud-Nissen F."/>
            <person name="Schobel S."/>
            <person name="Town C.D."/>
        </authorList>
    </citation>
    <scope>GENOME REANNOTATION</scope>
    <source>
        <strain>cv. Columbia</strain>
    </source>
</reference>
<reference key="3">
    <citation type="submission" date="2008-06" db="EMBL/GenBank/DDBJ databases">
        <title>Arabidopsis ORF clones.</title>
        <authorList>
            <person name="De Los Reyes C."/>
            <person name="Quan R."/>
            <person name="Chen H."/>
            <person name="Bautista V.R."/>
            <person name="Kim C.J."/>
            <person name="Ecker J.R."/>
        </authorList>
    </citation>
    <scope>NUCLEOTIDE SEQUENCE [LARGE SCALE MRNA]</scope>
    <source>
        <strain>cv. Columbia</strain>
    </source>
</reference>
<reference key="4">
    <citation type="journal article" date="2002" name="Gene">
        <title>Regulation of novel members of the Arabidopsis thaliana CCAAT-binding nuclear factor Y subunits.</title>
        <authorList>
            <person name="Gusmaroli G."/>
            <person name="Tonelli C."/>
            <person name="Mantovani R."/>
        </authorList>
    </citation>
    <scope>GENE FAMILY</scope>
    <scope>NOMENCLATURE</scope>
    <scope>TISSUE SPECIFICITY</scope>
</reference>
<name>NFYA8_ARATH</name>
<evidence type="ECO:0000250" key="1"/>
<evidence type="ECO:0000255" key="2">
    <source>
        <dbReference type="PROSITE-ProRule" id="PRU00966"/>
    </source>
</evidence>
<evidence type="ECO:0000256" key="3">
    <source>
        <dbReference type="SAM" id="MobiDB-lite"/>
    </source>
</evidence>
<evidence type="ECO:0000269" key="4">
    <source>
    </source>
</evidence>
<evidence type="ECO:0000305" key="5"/>
<proteinExistence type="evidence at protein level"/>
<protein>
    <recommendedName>
        <fullName>Nuclear transcription factor Y subunit A-8</fullName>
        <shortName>AtNF-YA-8</shortName>
    </recommendedName>
</protein>
<comment type="function">
    <text evidence="1">Stimulates the transcription of various genes by recognizing and binding to a CCAAT motif in promoters.</text>
</comment>
<comment type="subunit">
    <text evidence="1">Heterotrimeric transcription factor composed of three components, NF-YA, NF-YB and NF-YC. NF-YB and NF-YC must interact and dimerize for NF-YA association and DNA binding (By similarity).</text>
</comment>
<comment type="interaction">
    <interactant intactId="EBI-15192013">
        <id>Q9LNP6</id>
    </interactant>
    <interactant intactId="EBI-2466050">
        <id>Q8L4B2</id>
        <label>NFYC9</label>
    </interactant>
    <organismsDiffer>false</organismsDiffer>
    <experiments>3</experiments>
</comment>
<comment type="subcellular location">
    <subcellularLocation>
        <location evidence="5">Nucleus</location>
    </subcellularLocation>
</comment>
<comment type="tissue specificity">
    <text evidence="4">Expressed in the whole plant, except roots.</text>
</comment>
<comment type="similarity">
    <text evidence="2">Belongs to the NFYA/HAP2 subunit family.</text>
</comment>
<comment type="sequence caution" evidence="5">
    <conflict type="erroneous gene model prediction">
        <sequence resource="EMBL-CDS" id="AAF79478"/>
    </conflict>
</comment>